<name>EFP_MESH7</name>
<keyword id="KW-0963">Cytoplasm</keyword>
<keyword id="KW-0251">Elongation factor</keyword>
<keyword id="KW-0648">Protein biosynthesis</keyword>
<reference key="1">
    <citation type="journal article" date="2005" name="J. Bacteriol.">
        <title>Swine and poultry pathogens: the complete genome sequences of two strains of Mycoplasma hyopneumoniae and a strain of Mycoplasma synoviae.</title>
        <authorList>
            <person name="Vasconcelos A.T.R."/>
            <person name="Ferreira H.B."/>
            <person name="Bizarro C.V."/>
            <person name="Bonatto S.L."/>
            <person name="Carvalho M.O."/>
            <person name="Pinto P.M."/>
            <person name="Almeida D.F."/>
            <person name="Almeida L.G.P."/>
            <person name="Almeida R."/>
            <person name="Alves-Junior L."/>
            <person name="Assuncao E.N."/>
            <person name="Azevedo V.A.C."/>
            <person name="Bogo M.R."/>
            <person name="Brigido M.M."/>
            <person name="Brocchi M."/>
            <person name="Burity H.A."/>
            <person name="Camargo A.A."/>
            <person name="Camargo S.S."/>
            <person name="Carepo M.S."/>
            <person name="Carraro D.M."/>
            <person name="de Mattos Cascardo J.C."/>
            <person name="Castro L.A."/>
            <person name="Cavalcanti G."/>
            <person name="Chemale G."/>
            <person name="Collevatti R.G."/>
            <person name="Cunha C.W."/>
            <person name="Dallagiovanna B."/>
            <person name="Dambros B.P."/>
            <person name="Dellagostin O.A."/>
            <person name="Falcao C."/>
            <person name="Fantinatti-Garboggini F."/>
            <person name="Felipe M.S.S."/>
            <person name="Fiorentin L."/>
            <person name="Franco G.R."/>
            <person name="Freitas N.S.A."/>
            <person name="Frias D."/>
            <person name="Grangeiro T.B."/>
            <person name="Grisard E.C."/>
            <person name="Guimaraes C.T."/>
            <person name="Hungria M."/>
            <person name="Jardim S.N."/>
            <person name="Krieger M.A."/>
            <person name="Laurino J.P."/>
            <person name="Lima L.F.A."/>
            <person name="Lopes M.I."/>
            <person name="Loreto E.L.S."/>
            <person name="Madeira H.M.F."/>
            <person name="Manfio G.P."/>
            <person name="Maranhao A.Q."/>
            <person name="Martinkovics C.T."/>
            <person name="Medeiros S.R.B."/>
            <person name="Moreira M.A.M."/>
            <person name="Neiva M."/>
            <person name="Ramalho-Neto C.E."/>
            <person name="Nicolas M.F."/>
            <person name="Oliveira S.C."/>
            <person name="Paixao R.F.C."/>
            <person name="Pedrosa F.O."/>
            <person name="Pena S.D.J."/>
            <person name="Pereira M."/>
            <person name="Pereira-Ferrari L."/>
            <person name="Piffer I."/>
            <person name="Pinto L.S."/>
            <person name="Potrich D.P."/>
            <person name="Salim A.C.M."/>
            <person name="Santos F.R."/>
            <person name="Schmitt R."/>
            <person name="Schneider M.P.C."/>
            <person name="Schrank A."/>
            <person name="Schrank I.S."/>
            <person name="Schuck A.F."/>
            <person name="Seuanez H.N."/>
            <person name="Silva D.W."/>
            <person name="Silva R."/>
            <person name="Silva S.C."/>
            <person name="Soares C.M.A."/>
            <person name="Souza K.R.L."/>
            <person name="Souza R.C."/>
            <person name="Staats C.C."/>
            <person name="Steffens M.B.R."/>
            <person name="Teixeira S.M.R."/>
            <person name="Urmenyi T.P."/>
            <person name="Vainstein M.H."/>
            <person name="Zuccherato L.W."/>
            <person name="Simpson A.J.G."/>
            <person name="Zaha A."/>
        </authorList>
    </citation>
    <scope>NUCLEOTIDE SEQUENCE [LARGE SCALE GENOMIC DNA]</scope>
    <source>
        <strain>7448</strain>
    </source>
</reference>
<evidence type="ECO:0000255" key="1">
    <source>
        <dbReference type="HAMAP-Rule" id="MF_00141"/>
    </source>
</evidence>
<comment type="function">
    <text evidence="1">Involved in peptide bond synthesis. Stimulates efficient translation and peptide-bond synthesis on native or reconstituted 70S ribosomes in vitro. Probably functions indirectly by altering the affinity of the ribosome for aminoacyl-tRNA, thus increasing their reactivity as acceptors for peptidyl transferase.</text>
</comment>
<comment type="pathway">
    <text evidence="1">Protein biosynthesis; polypeptide chain elongation.</text>
</comment>
<comment type="subcellular location">
    <subcellularLocation>
        <location evidence="1">Cytoplasm</location>
    </subcellularLocation>
</comment>
<comment type="similarity">
    <text evidence="1">Belongs to the elongation factor P family.</text>
</comment>
<accession>Q4A7U4</accession>
<gene>
    <name evidence="1" type="primary">efp</name>
    <name type="ordered locus">MHP7448_0427</name>
</gene>
<dbReference type="EMBL" id="AE017244">
    <property type="protein sequence ID" value="AAZ53795.1"/>
    <property type="molecule type" value="Genomic_DNA"/>
</dbReference>
<dbReference type="RefSeq" id="WP_011290245.1">
    <property type="nucleotide sequence ID" value="NC_007332.1"/>
</dbReference>
<dbReference type="SMR" id="Q4A7U4"/>
<dbReference type="KEGG" id="mhp:MHP7448_0427"/>
<dbReference type="HOGENOM" id="CLU_074944_2_1_14"/>
<dbReference type="UniPathway" id="UPA00345"/>
<dbReference type="Proteomes" id="UP000000553">
    <property type="component" value="Chromosome"/>
</dbReference>
<dbReference type="GO" id="GO:0005737">
    <property type="term" value="C:cytoplasm"/>
    <property type="evidence" value="ECO:0007669"/>
    <property type="project" value="UniProtKB-SubCell"/>
</dbReference>
<dbReference type="GO" id="GO:0003746">
    <property type="term" value="F:translation elongation factor activity"/>
    <property type="evidence" value="ECO:0007669"/>
    <property type="project" value="UniProtKB-UniRule"/>
</dbReference>
<dbReference type="GO" id="GO:0043043">
    <property type="term" value="P:peptide biosynthetic process"/>
    <property type="evidence" value="ECO:0007669"/>
    <property type="project" value="InterPro"/>
</dbReference>
<dbReference type="CDD" id="cd04470">
    <property type="entry name" value="S1_EF-P_repeat_1"/>
    <property type="match status" value="1"/>
</dbReference>
<dbReference type="CDD" id="cd05794">
    <property type="entry name" value="S1_EF-P_repeat_2"/>
    <property type="match status" value="1"/>
</dbReference>
<dbReference type="FunFam" id="2.30.30.30:FF:000003">
    <property type="entry name" value="Elongation factor P"/>
    <property type="match status" value="1"/>
</dbReference>
<dbReference type="FunFam" id="2.40.50.140:FF:000004">
    <property type="entry name" value="Elongation factor P"/>
    <property type="match status" value="1"/>
</dbReference>
<dbReference type="FunFam" id="2.40.50.140:FF:000009">
    <property type="entry name" value="Elongation factor P"/>
    <property type="match status" value="1"/>
</dbReference>
<dbReference type="Gene3D" id="2.30.30.30">
    <property type="match status" value="1"/>
</dbReference>
<dbReference type="Gene3D" id="2.40.50.140">
    <property type="entry name" value="Nucleic acid-binding proteins"/>
    <property type="match status" value="2"/>
</dbReference>
<dbReference type="HAMAP" id="MF_00141">
    <property type="entry name" value="EF_P"/>
    <property type="match status" value="1"/>
</dbReference>
<dbReference type="InterPro" id="IPR015365">
    <property type="entry name" value="Elong-fact-P_C"/>
</dbReference>
<dbReference type="InterPro" id="IPR012340">
    <property type="entry name" value="NA-bd_OB-fold"/>
</dbReference>
<dbReference type="InterPro" id="IPR014722">
    <property type="entry name" value="Rib_uL2_dom2"/>
</dbReference>
<dbReference type="InterPro" id="IPR020599">
    <property type="entry name" value="Transl_elong_fac_P/YeiP"/>
</dbReference>
<dbReference type="InterPro" id="IPR013185">
    <property type="entry name" value="Transl_elong_KOW-like"/>
</dbReference>
<dbReference type="InterPro" id="IPR001059">
    <property type="entry name" value="Transl_elong_P/YeiP_cen"/>
</dbReference>
<dbReference type="InterPro" id="IPR013852">
    <property type="entry name" value="Transl_elong_P/YeiP_CS"/>
</dbReference>
<dbReference type="InterPro" id="IPR011768">
    <property type="entry name" value="Transl_elongation_fac_P"/>
</dbReference>
<dbReference type="InterPro" id="IPR008991">
    <property type="entry name" value="Translation_prot_SH3-like_sf"/>
</dbReference>
<dbReference type="NCBIfam" id="TIGR00038">
    <property type="entry name" value="efp"/>
    <property type="match status" value="1"/>
</dbReference>
<dbReference type="NCBIfam" id="NF001810">
    <property type="entry name" value="PRK00529.1"/>
    <property type="match status" value="1"/>
</dbReference>
<dbReference type="PANTHER" id="PTHR30053">
    <property type="entry name" value="ELONGATION FACTOR P"/>
    <property type="match status" value="1"/>
</dbReference>
<dbReference type="PANTHER" id="PTHR30053:SF12">
    <property type="entry name" value="ELONGATION FACTOR P (EF-P) FAMILY PROTEIN"/>
    <property type="match status" value="1"/>
</dbReference>
<dbReference type="Pfam" id="PF01132">
    <property type="entry name" value="EFP"/>
    <property type="match status" value="1"/>
</dbReference>
<dbReference type="Pfam" id="PF08207">
    <property type="entry name" value="EFP_N"/>
    <property type="match status" value="1"/>
</dbReference>
<dbReference type="Pfam" id="PF09285">
    <property type="entry name" value="Elong-fact-P_C"/>
    <property type="match status" value="1"/>
</dbReference>
<dbReference type="PIRSF" id="PIRSF005901">
    <property type="entry name" value="EF-P"/>
    <property type="match status" value="1"/>
</dbReference>
<dbReference type="SMART" id="SM01185">
    <property type="entry name" value="EFP"/>
    <property type="match status" value="1"/>
</dbReference>
<dbReference type="SMART" id="SM00841">
    <property type="entry name" value="Elong-fact-P_C"/>
    <property type="match status" value="1"/>
</dbReference>
<dbReference type="SUPFAM" id="SSF50249">
    <property type="entry name" value="Nucleic acid-binding proteins"/>
    <property type="match status" value="2"/>
</dbReference>
<dbReference type="SUPFAM" id="SSF50104">
    <property type="entry name" value="Translation proteins SH3-like domain"/>
    <property type="match status" value="1"/>
</dbReference>
<dbReference type="PROSITE" id="PS01275">
    <property type="entry name" value="EFP"/>
    <property type="match status" value="1"/>
</dbReference>
<sequence>MINVNEFRPGITFEFENEIYVVISAQHSKQGRGQANVKTKVKNLRTGAITIKTFSGGERVEKAHIEKISMSFLYNDGESIVLMDDSTYEQVAIENTKITWELNFLTEGIKVKLRKFNNEILDIELPAKIELKITSTFDAVRGNTTTNPTKRATLETGYEIDVPLFIKEGESVIVSTEDGKYVSRG</sequence>
<feature type="chain" id="PRO_1000010780" description="Elongation factor P">
    <location>
        <begin position="1"/>
        <end position="185"/>
    </location>
</feature>
<organism>
    <name type="scientific">Mesomycoplasma hyopneumoniae (strain 7448)</name>
    <name type="common">Mycoplasma hyopneumoniae</name>
    <dbReference type="NCBI Taxonomy" id="262722"/>
    <lineage>
        <taxon>Bacteria</taxon>
        <taxon>Bacillati</taxon>
        <taxon>Mycoplasmatota</taxon>
        <taxon>Mycoplasmoidales</taxon>
        <taxon>Metamycoplasmataceae</taxon>
        <taxon>Mesomycoplasma</taxon>
    </lineage>
</organism>
<proteinExistence type="inferred from homology"/>
<protein>
    <recommendedName>
        <fullName evidence="1">Elongation factor P</fullName>
        <shortName evidence="1">EF-P</shortName>
    </recommendedName>
</protein>